<dbReference type="EC" id="7.1.2.2" evidence="1"/>
<dbReference type="EMBL" id="CP001391">
    <property type="protein sequence ID" value="ACN95274.1"/>
    <property type="molecule type" value="Genomic_DNA"/>
</dbReference>
<dbReference type="RefSeq" id="WP_012673176.1">
    <property type="nucleotide sequence ID" value="NZ_MKIF01000201.1"/>
</dbReference>
<dbReference type="SMR" id="C0R2Y2"/>
<dbReference type="STRING" id="66084.WRi_004920"/>
<dbReference type="KEGG" id="wri:WRi_004920"/>
<dbReference type="HOGENOM" id="CLU_010091_2_1_5"/>
<dbReference type="Proteomes" id="UP000001293">
    <property type="component" value="Chromosome"/>
</dbReference>
<dbReference type="GO" id="GO:0005886">
    <property type="term" value="C:plasma membrane"/>
    <property type="evidence" value="ECO:0007669"/>
    <property type="project" value="UniProtKB-SubCell"/>
</dbReference>
<dbReference type="GO" id="GO:0045259">
    <property type="term" value="C:proton-transporting ATP synthase complex"/>
    <property type="evidence" value="ECO:0007669"/>
    <property type="project" value="UniProtKB-KW"/>
</dbReference>
<dbReference type="GO" id="GO:0043531">
    <property type="term" value="F:ADP binding"/>
    <property type="evidence" value="ECO:0007669"/>
    <property type="project" value="TreeGrafter"/>
</dbReference>
<dbReference type="GO" id="GO:0005524">
    <property type="term" value="F:ATP binding"/>
    <property type="evidence" value="ECO:0007669"/>
    <property type="project" value="UniProtKB-UniRule"/>
</dbReference>
<dbReference type="GO" id="GO:0046933">
    <property type="term" value="F:proton-transporting ATP synthase activity, rotational mechanism"/>
    <property type="evidence" value="ECO:0007669"/>
    <property type="project" value="UniProtKB-UniRule"/>
</dbReference>
<dbReference type="CDD" id="cd18113">
    <property type="entry name" value="ATP-synt_F1_alpha_C"/>
    <property type="match status" value="1"/>
</dbReference>
<dbReference type="CDD" id="cd18116">
    <property type="entry name" value="ATP-synt_F1_alpha_N"/>
    <property type="match status" value="1"/>
</dbReference>
<dbReference type="CDD" id="cd01132">
    <property type="entry name" value="F1-ATPase_alpha_CD"/>
    <property type="match status" value="1"/>
</dbReference>
<dbReference type="FunFam" id="1.20.150.20:FF:000001">
    <property type="entry name" value="ATP synthase subunit alpha"/>
    <property type="match status" value="1"/>
</dbReference>
<dbReference type="FunFam" id="3.40.50.300:FF:002432">
    <property type="entry name" value="ATP synthase subunit alpha, mitochondrial"/>
    <property type="match status" value="1"/>
</dbReference>
<dbReference type="Gene3D" id="2.40.30.20">
    <property type="match status" value="1"/>
</dbReference>
<dbReference type="Gene3D" id="1.20.150.20">
    <property type="entry name" value="ATP synthase alpha/beta chain, C-terminal domain"/>
    <property type="match status" value="1"/>
</dbReference>
<dbReference type="Gene3D" id="3.40.50.300">
    <property type="entry name" value="P-loop containing nucleotide triphosphate hydrolases"/>
    <property type="match status" value="1"/>
</dbReference>
<dbReference type="HAMAP" id="MF_01346">
    <property type="entry name" value="ATP_synth_alpha_bact"/>
    <property type="match status" value="1"/>
</dbReference>
<dbReference type="InterPro" id="IPR023366">
    <property type="entry name" value="ATP_synth_asu-like_sf"/>
</dbReference>
<dbReference type="InterPro" id="IPR000793">
    <property type="entry name" value="ATP_synth_asu_C"/>
</dbReference>
<dbReference type="InterPro" id="IPR038376">
    <property type="entry name" value="ATP_synth_asu_C_sf"/>
</dbReference>
<dbReference type="InterPro" id="IPR033732">
    <property type="entry name" value="ATP_synth_F1_a_nt-bd_dom"/>
</dbReference>
<dbReference type="InterPro" id="IPR005294">
    <property type="entry name" value="ATP_synth_F1_asu"/>
</dbReference>
<dbReference type="InterPro" id="IPR020003">
    <property type="entry name" value="ATPase_a/bsu_AS"/>
</dbReference>
<dbReference type="InterPro" id="IPR004100">
    <property type="entry name" value="ATPase_F1/V1/A1_a/bsu_N"/>
</dbReference>
<dbReference type="InterPro" id="IPR036121">
    <property type="entry name" value="ATPase_F1/V1/A1_a/bsu_N_sf"/>
</dbReference>
<dbReference type="InterPro" id="IPR000194">
    <property type="entry name" value="ATPase_F1/V1/A1_a/bsu_nucl-bd"/>
</dbReference>
<dbReference type="InterPro" id="IPR027417">
    <property type="entry name" value="P-loop_NTPase"/>
</dbReference>
<dbReference type="NCBIfam" id="TIGR00962">
    <property type="entry name" value="atpA"/>
    <property type="match status" value="1"/>
</dbReference>
<dbReference type="NCBIfam" id="NF009884">
    <property type="entry name" value="PRK13343.1"/>
    <property type="match status" value="1"/>
</dbReference>
<dbReference type="PANTHER" id="PTHR48082">
    <property type="entry name" value="ATP SYNTHASE SUBUNIT ALPHA, MITOCHONDRIAL"/>
    <property type="match status" value="1"/>
</dbReference>
<dbReference type="PANTHER" id="PTHR48082:SF2">
    <property type="entry name" value="ATP SYNTHASE SUBUNIT ALPHA, MITOCHONDRIAL"/>
    <property type="match status" value="1"/>
</dbReference>
<dbReference type="Pfam" id="PF00006">
    <property type="entry name" value="ATP-synt_ab"/>
    <property type="match status" value="1"/>
</dbReference>
<dbReference type="Pfam" id="PF00306">
    <property type="entry name" value="ATP-synt_ab_C"/>
    <property type="match status" value="1"/>
</dbReference>
<dbReference type="Pfam" id="PF02874">
    <property type="entry name" value="ATP-synt_ab_N"/>
    <property type="match status" value="1"/>
</dbReference>
<dbReference type="PIRSF" id="PIRSF039088">
    <property type="entry name" value="F_ATPase_subunit_alpha"/>
    <property type="match status" value="1"/>
</dbReference>
<dbReference type="SUPFAM" id="SSF47917">
    <property type="entry name" value="C-terminal domain of alpha and beta subunits of F1 ATP synthase"/>
    <property type="match status" value="1"/>
</dbReference>
<dbReference type="SUPFAM" id="SSF50615">
    <property type="entry name" value="N-terminal domain of alpha and beta subunits of F1 ATP synthase"/>
    <property type="match status" value="1"/>
</dbReference>
<dbReference type="SUPFAM" id="SSF52540">
    <property type="entry name" value="P-loop containing nucleoside triphosphate hydrolases"/>
    <property type="match status" value="1"/>
</dbReference>
<dbReference type="PROSITE" id="PS00152">
    <property type="entry name" value="ATPASE_ALPHA_BETA"/>
    <property type="match status" value="1"/>
</dbReference>
<accession>C0R2Y2</accession>
<name>ATPA_WOLWR</name>
<sequence length="513" mass="56600">MKNSMNVSEIASIIREKVETFDNPIKRENIGEVISVTDGIALVYGLEKAKFGEKVFFASGVEGIVLDLDHDTAGIVVLGNDRDVKEGDVVKCSGDVVQVPVGHELLGRVVNALGHPMDDGGEIRAKNRMDIESKAPGIIDRKSVHEPLQTGIKIIDLLIPIGRGQRELIIGDRQIGKTTIALDTIINQKKINDEVNENQKVYCVYVAIGQKISTVAKVVNKLKESGALEYTTVVVASASDCAPMQFLAPYAGCTIGEFFRDNGMHCLIIYDDLSKHAVAYRQMSLLLRRPPGREAYPGDIFYVHSRLLERAAKMSDKKGQGSLTALPIVETQAGDVSAYVPTNVISITDGQIFLESELFYKGFRPAVNIGLSVSRVGSAAQLKSVKKVAGSIKLSLAQYRELEDFAKFGSDLDASVQLSLNKGKYLVELLKQKQHLPMSIEEQVVLMYIFSNLYNQLSKIQISYINKFEHDLINYFHTVHPGVLKKLSNDMSDDIKGDIFNIVSNFVTQFNCV</sequence>
<reference key="1">
    <citation type="journal article" date="2009" name="Proc. Natl. Acad. Sci. U.S.A.">
        <title>The mosaic genome structure of the Wolbachia wRi strain infecting Drosophila simulans.</title>
        <authorList>
            <person name="Klasson L."/>
            <person name="Westberg J."/>
            <person name="Sapountzis P."/>
            <person name="Naeslund K."/>
            <person name="Lutnaes Y."/>
            <person name="Darby A.C."/>
            <person name="Veneti Z."/>
            <person name="Chen L."/>
            <person name="Braig H.R."/>
            <person name="Garrett R."/>
            <person name="Bourtzis K."/>
            <person name="Andersson S.G."/>
        </authorList>
    </citation>
    <scope>NUCLEOTIDE SEQUENCE [LARGE SCALE GENOMIC DNA]</scope>
    <source>
        <strain>wRi</strain>
    </source>
</reference>
<evidence type="ECO:0000255" key="1">
    <source>
        <dbReference type="HAMAP-Rule" id="MF_01346"/>
    </source>
</evidence>
<organism>
    <name type="scientific">Wolbachia sp. subsp. Drosophila simulans (strain wRi)</name>
    <dbReference type="NCBI Taxonomy" id="66084"/>
    <lineage>
        <taxon>Bacteria</taxon>
        <taxon>Pseudomonadati</taxon>
        <taxon>Pseudomonadota</taxon>
        <taxon>Alphaproteobacteria</taxon>
        <taxon>Rickettsiales</taxon>
        <taxon>Anaplasmataceae</taxon>
        <taxon>Wolbachieae</taxon>
        <taxon>Wolbachia</taxon>
    </lineage>
</organism>
<protein>
    <recommendedName>
        <fullName evidence="1">ATP synthase subunit alpha</fullName>
        <ecNumber evidence="1">7.1.2.2</ecNumber>
    </recommendedName>
    <alternativeName>
        <fullName evidence="1">ATP synthase F1 sector subunit alpha</fullName>
    </alternativeName>
    <alternativeName>
        <fullName evidence="1">F-ATPase subunit alpha</fullName>
    </alternativeName>
</protein>
<comment type="function">
    <text evidence="1">Produces ATP from ADP in the presence of a proton gradient across the membrane. The alpha chain is a regulatory subunit.</text>
</comment>
<comment type="catalytic activity">
    <reaction evidence="1">
        <text>ATP + H2O + 4 H(+)(in) = ADP + phosphate + 5 H(+)(out)</text>
        <dbReference type="Rhea" id="RHEA:57720"/>
        <dbReference type="ChEBI" id="CHEBI:15377"/>
        <dbReference type="ChEBI" id="CHEBI:15378"/>
        <dbReference type="ChEBI" id="CHEBI:30616"/>
        <dbReference type="ChEBI" id="CHEBI:43474"/>
        <dbReference type="ChEBI" id="CHEBI:456216"/>
        <dbReference type="EC" id="7.1.2.2"/>
    </reaction>
</comment>
<comment type="subunit">
    <text evidence="1">F-type ATPases have 2 components, CF(1) - the catalytic core - and CF(0) - the membrane proton channel. CF(1) has five subunits: alpha(3), beta(3), gamma(1), delta(1), epsilon(1). CF(0) has three main subunits: a(1), b(2) and c(9-12). The alpha and beta chains form an alternating ring which encloses part of the gamma chain. CF(1) is attached to CF(0) by a central stalk formed by the gamma and epsilon chains, while a peripheral stalk is formed by the delta and b chains.</text>
</comment>
<comment type="subcellular location">
    <subcellularLocation>
        <location evidence="1">Cell inner membrane</location>
        <topology evidence="1">Peripheral membrane protein</topology>
    </subcellularLocation>
</comment>
<comment type="similarity">
    <text evidence="1">Belongs to the ATPase alpha/beta chains family.</text>
</comment>
<feature type="chain" id="PRO_1000166564" description="ATP synthase subunit alpha">
    <location>
        <begin position="1"/>
        <end position="513"/>
    </location>
</feature>
<feature type="binding site" evidence="1">
    <location>
        <begin position="171"/>
        <end position="178"/>
    </location>
    <ligand>
        <name>ATP</name>
        <dbReference type="ChEBI" id="CHEBI:30616"/>
    </ligand>
</feature>
<feature type="site" description="Required for activity" evidence="1">
    <location>
        <position position="372"/>
    </location>
</feature>
<gene>
    <name evidence="1" type="primary">atpA</name>
    <name type="ordered locus">WRi_004920</name>
</gene>
<proteinExistence type="inferred from homology"/>
<keyword id="KW-0066">ATP synthesis</keyword>
<keyword id="KW-0067">ATP-binding</keyword>
<keyword id="KW-0997">Cell inner membrane</keyword>
<keyword id="KW-1003">Cell membrane</keyword>
<keyword id="KW-0139">CF(1)</keyword>
<keyword id="KW-0375">Hydrogen ion transport</keyword>
<keyword id="KW-0406">Ion transport</keyword>
<keyword id="KW-0472">Membrane</keyword>
<keyword id="KW-0547">Nucleotide-binding</keyword>
<keyword id="KW-1278">Translocase</keyword>
<keyword id="KW-0813">Transport</keyword>